<feature type="chain" id="PRO_1000025648" description="Protein Smg">
    <location>
        <begin position="1"/>
        <end position="157"/>
    </location>
</feature>
<evidence type="ECO:0000255" key="1">
    <source>
        <dbReference type="HAMAP-Rule" id="MF_00598"/>
    </source>
</evidence>
<protein>
    <recommendedName>
        <fullName evidence="1">Protein Smg</fullName>
    </recommendedName>
</protein>
<accession>A1AGH6</accession>
<proteinExistence type="inferred from homology"/>
<reference key="1">
    <citation type="journal article" date="2007" name="J. Bacteriol.">
        <title>The genome sequence of avian pathogenic Escherichia coli strain O1:K1:H7 shares strong similarities with human extraintestinal pathogenic E. coli genomes.</title>
        <authorList>
            <person name="Johnson T.J."/>
            <person name="Kariyawasam S."/>
            <person name="Wannemuehler Y."/>
            <person name="Mangiamele P."/>
            <person name="Johnson S.J."/>
            <person name="Doetkott C."/>
            <person name="Skyberg J.A."/>
            <person name="Lynne A.M."/>
            <person name="Johnson J.R."/>
            <person name="Nolan L.K."/>
        </authorList>
    </citation>
    <scope>NUCLEOTIDE SEQUENCE [LARGE SCALE GENOMIC DNA]</scope>
</reference>
<name>SMG_ECOK1</name>
<sequence>MFDVLMYLFETYIHTEAELRVDQDKLEQDLTDAGFDREDIYNALLWLEKLADYQEGLAEPMQLASDPLSMRIYTPEECERLDASCRGFLLFLEQIQVLNLETREMVIERVLALDTAEFDLEDLKWVILMVLFNIPGCENAYQQMEELLFEVNEGMLH</sequence>
<keyword id="KW-1185">Reference proteome</keyword>
<comment type="similarity">
    <text evidence="1">Belongs to the Smg family.</text>
</comment>
<organism>
    <name type="scientific">Escherichia coli O1:K1 / APEC</name>
    <dbReference type="NCBI Taxonomy" id="405955"/>
    <lineage>
        <taxon>Bacteria</taxon>
        <taxon>Pseudomonadati</taxon>
        <taxon>Pseudomonadota</taxon>
        <taxon>Gammaproteobacteria</taxon>
        <taxon>Enterobacterales</taxon>
        <taxon>Enterobacteriaceae</taxon>
        <taxon>Escherichia</taxon>
    </lineage>
</organism>
<gene>
    <name evidence="1" type="primary">smg</name>
    <name type="ordered locus">Ecok1_32720</name>
    <name type="ORF">APECO1_3162</name>
</gene>
<dbReference type="EMBL" id="CP000468">
    <property type="protein sequence ID" value="ABJ02766.1"/>
    <property type="molecule type" value="Genomic_DNA"/>
</dbReference>
<dbReference type="RefSeq" id="WP_000460672.1">
    <property type="nucleotide sequence ID" value="NZ_CADILS010000044.1"/>
</dbReference>
<dbReference type="SMR" id="A1AGH6"/>
<dbReference type="GeneID" id="86948148"/>
<dbReference type="KEGG" id="ecv:APECO1_3162"/>
<dbReference type="HOGENOM" id="CLU_133242_0_0_6"/>
<dbReference type="Proteomes" id="UP000008216">
    <property type="component" value="Chromosome"/>
</dbReference>
<dbReference type="HAMAP" id="MF_00598">
    <property type="entry name" value="Smg"/>
    <property type="match status" value="1"/>
</dbReference>
<dbReference type="InterPro" id="IPR007456">
    <property type="entry name" value="Smg"/>
</dbReference>
<dbReference type="NCBIfam" id="NF002897">
    <property type="entry name" value="PRK03430.1"/>
    <property type="match status" value="1"/>
</dbReference>
<dbReference type="PANTHER" id="PTHR38692">
    <property type="entry name" value="PROTEIN SMG"/>
    <property type="match status" value="1"/>
</dbReference>
<dbReference type="PANTHER" id="PTHR38692:SF1">
    <property type="entry name" value="PROTEIN SMG"/>
    <property type="match status" value="1"/>
</dbReference>
<dbReference type="Pfam" id="PF04361">
    <property type="entry name" value="DUF494"/>
    <property type="match status" value="1"/>
</dbReference>